<dbReference type="EMBL" id="CP001344">
    <property type="protein sequence ID" value="ACL47459.1"/>
    <property type="molecule type" value="Genomic_DNA"/>
</dbReference>
<dbReference type="SMR" id="B8HQ62"/>
<dbReference type="STRING" id="395961.Cyan7425_5166"/>
<dbReference type="KEGG" id="cyn:Cyan7425_5166"/>
<dbReference type="eggNOG" id="ENOG502Z86M">
    <property type="taxonomic scope" value="Bacteria"/>
</dbReference>
<dbReference type="HOGENOM" id="CLU_079763_1_0_3"/>
<dbReference type="OrthoDB" id="463078at2"/>
<dbReference type="GO" id="GO:0030096">
    <property type="term" value="C:plasma membrane-derived thylakoid photosystem II"/>
    <property type="evidence" value="ECO:0007669"/>
    <property type="project" value="TreeGrafter"/>
</dbReference>
<dbReference type="GO" id="GO:0010207">
    <property type="term" value="P:photosystem II assembly"/>
    <property type="evidence" value="ECO:0007669"/>
    <property type="project" value="InterPro"/>
</dbReference>
<dbReference type="HAMAP" id="MF_01843">
    <property type="entry name" value="Thf1"/>
    <property type="match status" value="1"/>
</dbReference>
<dbReference type="InterPro" id="IPR017499">
    <property type="entry name" value="Thf1"/>
</dbReference>
<dbReference type="NCBIfam" id="TIGR03060">
    <property type="entry name" value="PS_II_psb29"/>
    <property type="match status" value="1"/>
</dbReference>
<dbReference type="PANTHER" id="PTHR34793">
    <property type="entry name" value="PROTEIN THYLAKOID FORMATION 1, CHLOROPLASTIC"/>
    <property type="match status" value="1"/>
</dbReference>
<dbReference type="PANTHER" id="PTHR34793:SF1">
    <property type="entry name" value="PROTEIN THYLAKOID FORMATION 1, CHLOROPLASTIC"/>
    <property type="match status" value="1"/>
</dbReference>
<dbReference type="Pfam" id="PF11264">
    <property type="entry name" value="ThylakoidFormat"/>
    <property type="match status" value="1"/>
</dbReference>
<organism>
    <name type="scientific">Cyanothece sp. (strain PCC 7425 / ATCC 29141)</name>
    <dbReference type="NCBI Taxonomy" id="395961"/>
    <lineage>
        <taxon>Bacteria</taxon>
        <taxon>Bacillati</taxon>
        <taxon>Cyanobacteriota</taxon>
        <taxon>Cyanophyceae</taxon>
        <taxon>Gomontiellales</taxon>
        <taxon>Cyanothecaceae</taxon>
        <taxon>Cyanothece</taxon>
    </lineage>
</organism>
<protein>
    <recommendedName>
        <fullName evidence="1">Protein Thf1</fullName>
    </recommendedName>
</protein>
<gene>
    <name evidence="1" type="primary">thf1</name>
    <name type="ordered locus">Cyan7425_5166</name>
</gene>
<feature type="chain" id="PRO_1000188424" description="Protein Thf1">
    <location>
        <begin position="1"/>
        <end position="236"/>
    </location>
</feature>
<feature type="region of interest" description="Disordered" evidence="2">
    <location>
        <begin position="206"/>
        <end position="236"/>
    </location>
</feature>
<feature type="coiled-coil region" evidence="1">
    <location>
        <begin position="180"/>
        <end position="220"/>
    </location>
</feature>
<feature type="compositionally biased region" description="Polar residues" evidence="2">
    <location>
        <begin position="227"/>
        <end position="236"/>
    </location>
</feature>
<evidence type="ECO:0000255" key="1">
    <source>
        <dbReference type="HAMAP-Rule" id="MF_01843"/>
    </source>
</evidence>
<evidence type="ECO:0000256" key="2">
    <source>
        <dbReference type="SAM" id="MobiDB-lite"/>
    </source>
</evidence>
<sequence length="236" mass="26860">MNNPRTVSDTKRAFYHNHARPINSIYRRVVEELLVEIHLLRVNQTFVYDPVFALGVVTTFERFMQGYHPPADQTSIFNAICLAQELDPQQVQQDAQELLGRVRGQSLESLLDWISTAASLGGDEQQNRLRAIASNPTFKYSRLFAVGLFTLLEQAEPELGKDEARLLQVLQQVGEVMHLPVEKMQKDLEQYRSNLEKMTQARKTLEDIVAAERKRRQQNAAPDRSPESASATEAPN</sequence>
<accession>B8HQ62</accession>
<comment type="function">
    <text evidence="1">May be involved in photosynthetic membrane biogenesis.</text>
</comment>
<comment type="similarity">
    <text evidence="1">Belongs to the THF1 family.</text>
</comment>
<proteinExistence type="inferred from homology"/>
<keyword id="KW-0175">Coiled coil</keyword>
<reference key="1">
    <citation type="journal article" date="2011" name="MBio">
        <title>Novel metabolic attributes of the genus Cyanothece, comprising a group of unicellular nitrogen-fixing Cyanobacteria.</title>
        <authorList>
            <person name="Bandyopadhyay A."/>
            <person name="Elvitigala T."/>
            <person name="Welsh E."/>
            <person name="Stockel J."/>
            <person name="Liberton M."/>
            <person name="Min H."/>
            <person name="Sherman L.A."/>
            <person name="Pakrasi H.B."/>
        </authorList>
    </citation>
    <scope>NUCLEOTIDE SEQUENCE [LARGE SCALE GENOMIC DNA]</scope>
    <source>
        <strain>PCC 7425 / ATCC 29141</strain>
    </source>
</reference>
<name>THF1_CYAP4</name>